<sequence length="643" mass="73011">MTNNSGNNSGNSNNPRTENHFDYVRITLASPERIMEWGQRTLPNGQIVGEVTKPETINYRTLKPEMDGLFCEKIFGPSKDWECHCGKYKRVRHRGIVCERCGVEVTESRVRRHRMGFIKLAAPVSHVWYLKGIPSYVAILLDMPLRDVEQIVYFNCYTVLSPGDNSNLFYQQLLTEDEWLEIEDETYAEDSKIISEPIVGIGAEALKYLLKELDLPFIGDGLRQEITGSKGQRRAKLIKRLRVIDNFIATGAKPEWMVLDVVPVIPPDLRPMVQLDGGRFATSDLNDLYRRVINRNNRLGRLKEILAPEIIIRNEKRMLQEAVDALIDNGRRGRTVVGANNRPLKSLSDIIEGKQGRFRQNLLGKRVDYSGRSVIVVGPRLKIHQCGLPKEMAIELFQPFVIHRLIRQNIVNNIKAAKKLIQRADDEVMQVLQEVIEGHPILLNRAPTLHRLGIQAFEPKLVDGRAIQLHPLVCPAFNADFDGDQMAVHVPLSIEAQTEARILMLASANILSPATGEPVITPSQDMVLGIYYLTSSKPAQTQPAFGERGLTFANTYDVISAYDNDRIGLHTWIWVRFSGEVEDDDESEMPIKIETAEDGSYTELWRYRRERFDKDKALVSRYLLTTVGRVIMNTSIMNSINAN</sequence>
<protein>
    <recommendedName>
        <fullName evidence="1">DNA-directed RNA polymerase subunit beta'</fullName>
        <ecNumber evidence="1">2.7.7.6</ecNumber>
    </recommendedName>
    <alternativeName>
        <fullName evidence="1">DNA-directed RNA polymerase subunit gamma</fullName>
        <shortName evidence="1">RNAP subunit gamma</shortName>
    </alternativeName>
    <alternativeName>
        <fullName evidence="1">PEP</fullName>
    </alternativeName>
    <alternativeName>
        <fullName evidence="1">Plastid-encoded RNA polymerase subunit beta'</fullName>
        <shortName evidence="1">RNA polymerase subunit beta'</shortName>
    </alternativeName>
    <alternativeName>
        <fullName evidence="1">RNA polymerase subunit gamma</fullName>
    </alternativeName>
    <alternativeName>
        <fullName evidence="1">Transcriptase subunit gamma</fullName>
    </alternativeName>
</protein>
<gene>
    <name evidence="1" type="primary">rpoC1</name>
    <name type="ordered locus">PCC_0096</name>
</gene>
<geneLocation type="organellar chromatophore"/>
<name>RPOC1_PAUCH</name>
<comment type="function">
    <text evidence="1">DNA-dependent RNA polymerase catalyzes the transcription of DNA into RNA using the four ribonucleoside triphosphates as substrates.</text>
</comment>
<comment type="catalytic activity">
    <reaction evidence="1">
        <text>RNA(n) + a ribonucleoside 5'-triphosphate = RNA(n+1) + diphosphate</text>
        <dbReference type="Rhea" id="RHEA:21248"/>
        <dbReference type="Rhea" id="RHEA-COMP:14527"/>
        <dbReference type="Rhea" id="RHEA-COMP:17342"/>
        <dbReference type="ChEBI" id="CHEBI:33019"/>
        <dbReference type="ChEBI" id="CHEBI:61557"/>
        <dbReference type="ChEBI" id="CHEBI:140395"/>
        <dbReference type="EC" id="2.7.7.6"/>
    </reaction>
</comment>
<comment type="cofactor">
    <cofactor evidence="1">
        <name>Mg(2+)</name>
        <dbReference type="ChEBI" id="CHEBI:18420"/>
    </cofactor>
    <text evidence="1">Binds 1 Mg(2+) ion per subunit.</text>
</comment>
<comment type="cofactor">
    <cofactor evidence="1">
        <name>Zn(2+)</name>
        <dbReference type="ChEBI" id="CHEBI:29105"/>
    </cofactor>
    <text evidence="1">Binds 1 Zn(2+) ion per subunit.</text>
</comment>
<comment type="subunit">
    <text evidence="1">In plastids the minimal PEP RNA polymerase catalytic core is composed of four subunits: alpha, beta, beta', and beta''. When a (nuclear-encoded) sigma factor is associated with the core the holoenzyme is formed, which can initiate transcription.</text>
</comment>
<comment type="subcellular location">
    <subcellularLocation>
        <location>Plastid</location>
        <location>Organellar chromatophore</location>
    </subcellularLocation>
</comment>
<comment type="similarity">
    <text evidence="1">Belongs to the RNA polymerase beta' chain family. RpoC1 subfamily.</text>
</comment>
<dbReference type="EC" id="2.7.7.6" evidence="1"/>
<dbReference type="EMBL" id="CP000815">
    <property type="protein sequence ID" value="ACB42548.1"/>
    <property type="molecule type" value="Genomic_DNA"/>
</dbReference>
<dbReference type="RefSeq" id="YP_002048758.1">
    <property type="nucleotide sequence ID" value="NC_011087.1"/>
</dbReference>
<dbReference type="SMR" id="B1X3M9"/>
<dbReference type="GeneID" id="6481181"/>
<dbReference type="GO" id="GO:0000428">
    <property type="term" value="C:DNA-directed RNA polymerase complex"/>
    <property type="evidence" value="ECO:0007669"/>
    <property type="project" value="UniProtKB-KW"/>
</dbReference>
<dbReference type="GO" id="GO:0005739">
    <property type="term" value="C:mitochondrion"/>
    <property type="evidence" value="ECO:0007669"/>
    <property type="project" value="GOC"/>
</dbReference>
<dbReference type="GO" id="GO:0070111">
    <property type="term" value="C:organellar chromatophore"/>
    <property type="evidence" value="ECO:0007669"/>
    <property type="project" value="UniProtKB-SubCell"/>
</dbReference>
<dbReference type="GO" id="GO:0009536">
    <property type="term" value="C:plastid"/>
    <property type="evidence" value="ECO:0007669"/>
    <property type="project" value="UniProtKB-KW"/>
</dbReference>
<dbReference type="GO" id="GO:0003677">
    <property type="term" value="F:DNA binding"/>
    <property type="evidence" value="ECO:0007669"/>
    <property type="project" value="UniProtKB-UniRule"/>
</dbReference>
<dbReference type="GO" id="GO:0003899">
    <property type="term" value="F:DNA-directed RNA polymerase activity"/>
    <property type="evidence" value="ECO:0007669"/>
    <property type="project" value="UniProtKB-UniRule"/>
</dbReference>
<dbReference type="GO" id="GO:0000287">
    <property type="term" value="F:magnesium ion binding"/>
    <property type="evidence" value="ECO:0007669"/>
    <property type="project" value="UniProtKB-UniRule"/>
</dbReference>
<dbReference type="GO" id="GO:0008270">
    <property type="term" value="F:zinc ion binding"/>
    <property type="evidence" value="ECO:0007669"/>
    <property type="project" value="UniProtKB-UniRule"/>
</dbReference>
<dbReference type="GO" id="GO:0006351">
    <property type="term" value="P:DNA-templated transcription"/>
    <property type="evidence" value="ECO:0007669"/>
    <property type="project" value="UniProtKB-UniRule"/>
</dbReference>
<dbReference type="Gene3D" id="1.10.40.90">
    <property type="match status" value="1"/>
</dbReference>
<dbReference type="Gene3D" id="2.40.40.20">
    <property type="match status" value="1"/>
</dbReference>
<dbReference type="Gene3D" id="4.10.860.120">
    <property type="entry name" value="RNA polymerase II, clamp domain"/>
    <property type="match status" value="1"/>
</dbReference>
<dbReference type="Gene3D" id="1.10.274.100">
    <property type="entry name" value="RNA polymerase Rpb1, domain 3"/>
    <property type="match status" value="1"/>
</dbReference>
<dbReference type="HAMAP" id="MF_01323">
    <property type="entry name" value="RNApol_bact_RpoC1"/>
    <property type="match status" value="1"/>
</dbReference>
<dbReference type="InterPro" id="IPR012755">
    <property type="entry name" value="DNA-dir_RpoC1_gamma"/>
</dbReference>
<dbReference type="InterPro" id="IPR045867">
    <property type="entry name" value="DNA-dir_RpoC_beta_prime"/>
</dbReference>
<dbReference type="InterPro" id="IPR000722">
    <property type="entry name" value="RNA_pol_asu"/>
</dbReference>
<dbReference type="InterPro" id="IPR006592">
    <property type="entry name" value="RNA_pol_N"/>
</dbReference>
<dbReference type="InterPro" id="IPR007080">
    <property type="entry name" value="RNA_pol_Rpb1_1"/>
</dbReference>
<dbReference type="InterPro" id="IPR007066">
    <property type="entry name" value="RNA_pol_Rpb1_3"/>
</dbReference>
<dbReference type="InterPro" id="IPR042102">
    <property type="entry name" value="RNA_pol_Rpb1_3_sf"/>
</dbReference>
<dbReference type="InterPro" id="IPR044893">
    <property type="entry name" value="RNA_pol_Rpb1_clamp_domain"/>
</dbReference>
<dbReference type="InterPro" id="IPR034678">
    <property type="entry name" value="RNApol_RpoC1"/>
</dbReference>
<dbReference type="NCBIfam" id="NF002729">
    <property type="entry name" value="PRK02625.1"/>
    <property type="match status" value="1"/>
</dbReference>
<dbReference type="NCBIfam" id="TIGR02387">
    <property type="entry name" value="rpoC1_cyan"/>
    <property type="match status" value="1"/>
</dbReference>
<dbReference type="PANTHER" id="PTHR19376">
    <property type="entry name" value="DNA-DIRECTED RNA POLYMERASE"/>
    <property type="match status" value="1"/>
</dbReference>
<dbReference type="PANTHER" id="PTHR19376:SF54">
    <property type="entry name" value="DNA-DIRECTED RNA POLYMERASE SUBUNIT BETA"/>
    <property type="match status" value="1"/>
</dbReference>
<dbReference type="Pfam" id="PF04997">
    <property type="entry name" value="RNA_pol_Rpb1_1"/>
    <property type="match status" value="1"/>
</dbReference>
<dbReference type="Pfam" id="PF00623">
    <property type="entry name" value="RNA_pol_Rpb1_2"/>
    <property type="match status" value="1"/>
</dbReference>
<dbReference type="Pfam" id="PF04983">
    <property type="entry name" value="RNA_pol_Rpb1_3"/>
    <property type="match status" value="1"/>
</dbReference>
<dbReference type="SMART" id="SM00663">
    <property type="entry name" value="RPOLA_N"/>
    <property type="match status" value="1"/>
</dbReference>
<dbReference type="SUPFAM" id="SSF64484">
    <property type="entry name" value="beta and beta-prime subunits of DNA dependent RNA-polymerase"/>
    <property type="match status" value="1"/>
</dbReference>
<organism>
    <name type="scientific">Paulinella chromatophora</name>
    <dbReference type="NCBI Taxonomy" id="39717"/>
    <lineage>
        <taxon>Eukaryota</taxon>
        <taxon>Sar</taxon>
        <taxon>Rhizaria</taxon>
        <taxon>Cercozoa</taxon>
        <taxon>Imbricatea</taxon>
        <taxon>Silicofilosea</taxon>
        <taxon>Euglyphida</taxon>
        <taxon>Paulinellidae</taxon>
        <taxon>Paulinella</taxon>
    </lineage>
</organism>
<feature type="chain" id="PRO_0000353517" description="DNA-directed RNA polymerase subunit beta'">
    <location>
        <begin position="1"/>
        <end position="643"/>
    </location>
</feature>
<feature type="binding site" evidence="1">
    <location>
        <position position="83"/>
    </location>
    <ligand>
        <name>Zn(2+)</name>
        <dbReference type="ChEBI" id="CHEBI:29105"/>
    </ligand>
</feature>
<feature type="binding site" evidence="1">
    <location>
        <position position="85"/>
    </location>
    <ligand>
        <name>Zn(2+)</name>
        <dbReference type="ChEBI" id="CHEBI:29105"/>
    </ligand>
</feature>
<feature type="binding site" evidence="1">
    <location>
        <position position="98"/>
    </location>
    <ligand>
        <name>Zn(2+)</name>
        <dbReference type="ChEBI" id="CHEBI:29105"/>
    </ligand>
</feature>
<feature type="binding site" evidence="1">
    <location>
        <position position="101"/>
    </location>
    <ligand>
        <name>Zn(2+)</name>
        <dbReference type="ChEBI" id="CHEBI:29105"/>
    </ligand>
</feature>
<feature type="binding site" evidence="1">
    <location>
        <position position="480"/>
    </location>
    <ligand>
        <name>Mg(2+)</name>
        <dbReference type="ChEBI" id="CHEBI:18420"/>
    </ligand>
</feature>
<feature type="binding site" evidence="1">
    <location>
        <position position="482"/>
    </location>
    <ligand>
        <name>Mg(2+)</name>
        <dbReference type="ChEBI" id="CHEBI:18420"/>
    </ligand>
</feature>
<feature type="binding site" evidence="1">
    <location>
        <position position="484"/>
    </location>
    <ligand>
        <name>Mg(2+)</name>
        <dbReference type="ChEBI" id="CHEBI:18420"/>
    </ligand>
</feature>
<accession>B1X3M9</accession>
<proteinExistence type="inferred from homology"/>
<keyword id="KW-0240">DNA-directed RNA polymerase</keyword>
<keyword id="KW-0460">Magnesium</keyword>
<keyword id="KW-0479">Metal-binding</keyword>
<keyword id="KW-0548">Nucleotidyltransferase</keyword>
<keyword id="KW-0994">Organellar chromatophore</keyword>
<keyword id="KW-0934">Plastid</keyword>
<keyword id="KW-0804">Transcription</keyword>
<keyword id="KW-0808">Transferase</keyword>
<keyword id="KW-0862">Zinc</keyword>
<reference key="1">
    <citation type="journal article" date="2008" name="Curr. Biol.">
        <title>Chromatophore genome sequence of Paulinella sheds light on acquisition of photosynthesis by eukaryotes.</title>
        <authorList>
            <person name="Nowack E.C.M."/>
            <person name="Melkonian M."/>
            <person name="Gloeckner G."/>
        </authorList>
    </citation>
    <scope>NUCLEOTIDE SEQUENCE [LARGE SCALE GENOMIC DNA]</scope>
</reference>
<evidence type="ECO:0000255" key="1">
    <source>
        <dbReference type="HAMAP-Rule" id="MF_01323"/>
    </source>
</evidence>